<name>RF1_LATSS</name>
<sequence length="365" mass="41433">MDKMFEQLDGLLDRYAELQELMSDPEVINETSRYMELSKEEAGLREIVGKYTRLKEVLSEVTENEELLRETTDSEMTELVKADLEELQTEKAQLEQEIKILMLPTDPNDEKNIIMEIRGAAGGDEASLFAGDLLNMYQRYAESQNWQTEIIDETATEVGGFKEVAMMITGKNVYSKLKYENGAHRVQRIPKTESQGRVHTSTATVAVMPEYDGVDVELEAKDIRVDVYRASGAGGQHINKTSSAVRMTHIPTGIVVAMQDQRSQQQNRVKAMKILQARVYDYYESQNQSEYDSSRKSAVGSGDRSERIRTYNYPQNRVTDHRIGLTLNKLDRIMNGELGDVIDALILFDQTEKLEQLQDGTAHLS</sequence>
<feature type="chain" id="PRO_0000263290" description="Peptide chain release factor 1">
    <location>
        <begin position="1"/>
        <end position="365"/>
    </location>
</feature>
<feature type="modified residue" description="N5-methylglutamine" evidence="1">
    <location>
        <position position="236"/>
    </location>
</feature>
<keyword id="KW-0963">Cytoplasm</keyword>
<keyword id="KW-0488">Methylation</keyword>
<keyword id="KW-0648">Protein biosynthesis</keyword>
<keyword id="KW-1185">Reference proteome</keyword>
<reference key="1">
    <citation type="journal article" date="2005" name="Nat. Biotechnol.">
        <title>The complete genome sequence of the meat-borne lactic acid bacterium Lactobacillus sakei 23K.</title>
        <authorList>
            <person name="Chaillou S."/>
            <person name="Champomier-Verges M.-C."/>
            <person name="Cornet M."/>
            <person name="Crutz-Le Coq A.-M."/>
            <person name="Dudez A.-M."/>
            <person name="Martin V."/>
            <person name="Beaufils S."/>
            <person name="Darbon-Rongere E."/>
            <person name="Bossy R."/>
            <person name="Loux V."/>
            <person name="Zagorec M."/>
        </authorList>
    </citation>
    <scope>NUCLEOTIDE SEQUENCE [LARGE SCALE GENOMIC DNA]</scope>
    <source>
        <strain>23K</strain>
    </source>
</reference>
<comment type="function">
    <text evidence="1">Peptide chain release factor 1 directs the termination of translation in response to the peptide chain termination codons UAG and UAA.</text>
</comment>
<comment type="subcellular location">
    <subcellularLocation>
        <location evidence="1">Cytoplasm</location>
    </subcellularLocation>
</comment>
<comment type="PTM">
    <text evidence="1">Methylated by PrmC. Methylation increases the termination efficiency of RF1.</text>
</comment>
<comment type="similarity">
    <text evidence="1">Belongs to the prokaryotic/mitochondrial release factor family.</text>
</comment>
<organism>
    <name type="scientific">Latilactobacillus sakei subsp. sakei (strain 23K)</name>
    <name type="common">Lactobacillus sakei subsp. sakei</name>
    <dbReference type="NCBI Taxonomy" id="314315"/>
    <lineage>
        <taxon>Bacteria</taxon>
        <taxon>Bacillati</taxon>
        <taxon>Bacillota</taxon>
        <taxon>Bacilli</taxon>
        <taxon>Lactobacillales</taxon>
        <taxon>Lactobacillaceae</taxon>
        <taxon>Latilactobacillus</taxon>
    </lineage>
</organism>
<gene>
    <name evidence="1" type="primary">prfA</name>
    <name type="ordered locus">LCA_1137</name>
</gene>
<evidence type="ECO:0000255" key="1">
    <source>
        <dbReference type="HAMAP-Rule" id="MF_00093"/>
    </source>
</evidence>
<proteinExistence type="inferred from homology"/>
<protein>
    <recommendedName>
        <fullName evidence="1">Peptide chain release factor 1</fullName>
        <shortName evidence="1">RF-1</shortName>
    </recommendedName>
</protein>
<dbReference type="EMBL" id="CR936503">
    <property type="protein sequence ID" value="CAI55438.1"/>
    <property type="molecule type" value="Genomic_DNA"/>
</dbReference>
<dbReference type="RefSeq" id="WP_011374836.1">
    <property type="nucleotide sequence ID" value="NC_007576.1"/>
</dbReference>
<dbReference type="SMR" id="Q38WJ4"/>
<dbReference type="STRING" id="314315.LCA_1137"/>
<dbReference type="GeneID" id="57133994"/>
<dbReference type="KEGG" id="lsa:LCA_1137"/>
<dbReference type="eggNOG" id="COG0216">
    <property type="taxonomic scope" value="Bacteria"/>
</dbReference>
<dbReference type="HOGENOM" id="CLU_036856_0_1_9"/>
<dbReference type="OrthoDB" id="9806673at2"/>
<dbReference type="Proteomes" id="UP000002707">
    <property type="component" value="Chromosome"/>
</dbReference>
<dbReference type="GO" id="GO:0005737">
    <property type="term" value="C:cytoplasm"/>
    <property type="evidence" value="ECO:0007669"/>
    <property type="project" value="UniProtKB-SubCell"/>
</dbReference>
<dbReference type="GO" id="GO:0016149">
    <property type="term" value="F:translation release factor activity, codon specific"/>
    <property type="evidence" value="ECO:0007669"/>
    <property type="project" value="UniProtKB-UniRule"/>
</dbReference>
<dbReference type="FunFam" id="3.30.160.20:FF:000004">
    <property type="entry name" value="Peptide chain release factor 1"/>
    <property type="match status" value="1"/>
</dbReference>
<dbReference type="FunFam" id="3.30.70.1660:FF:000002">
    <property type="entry name" value="Peptide chain release factor 1"/>
    <property type="match status" value="1"/>
</dbReference>
<dbReference type="FunFam" id="3.30.70.1660:FF:000004">
    <property type="entry name" value="Peptide chain release factor 1"/>
    <property type="match status" value="1"/>
</dbReference>
<dbReference type="Gene3D" id="3.30.160.20">
    <property type="match status" value="1"/>
</dbReference>
<dbReference type="Gene3D" id="3.30.70.1660">
    <property type="match status" value="2"/>
</dbReference>
<dbReference type="Gene3D" id="6.10.140.1950">
    <property type="match status" value="1"/>
</dbReference>
<dbReference type="HAMAP" id="MF_00093">
    <property type="entry name" value="Rel_fac_1"/>
    <property type="match status" value="1"/>
</dbReference>
<dbReference type="InterPro" id="IPR005139">
    <property type="entry name" value="PCRF"/>
</dbReference>
<dbReference type="InterPro" id="IPR000352">
    <property type="entry name" value="Pep_chain_release_fac_I"/>
</dbReference>
<dbReference type="InterPro" id="IPR045853">
    <property type="entry name" value="Pep_chain_release_fac_I_sf"/>
</dbReference>
<dbReference type="InterPro" id="IPR050057">
    <property type="entry name" value="Prokaryotic/Mito_RF"/>
</dbReference>
<dbReference type="InterPro" id="IPR004373">
    <property type="entry name" value="RF-1"/>
</dbReference>
<dbReference type="NCBIfam" id="TIGR00019">
    <property type="entry name" value="prfA"/>
    <property type="match status" value="1"/>
</dbReference>
<dbReference type="NCBIfam" id="NF001859">
    <property type="entry name" value="PRK00591.1"/>
    <property type="match status" value="1"/>
</dbReference>
<dbReference type="PANTHER" id="PTHR43804">
    <property type="entry name" value="LD18447P"/>
    <property type="match status" value="1"/>
</dbReference>
<dbReference type="PANTHER" id="PTHR43804:SF7">
    <property type="entry name" value="LD18447P"/>
    <property type="match status" value="1"/>
</dbReference>
<dbReference type="Pfam" id="PF03462">
    <property type="entry name" value="PCRF"/>
    <property type="match status" value="1"/>
</dbReference>
<dbReference type="Pfam" id="PF00472">
    <property type="entry name" value="RF-1"/>
    <property type="match status" value="1"/>
</dbReference>
<dbReference type="SMART" id="SM00937">
    <property type="entry name" value="PCRF"/>
    <property type="match status" value="1"/>
</dbReference>
<dbReference type="SUPFAM" id="SSF75620">
    <property type="entry name" value="Release factor"/>
    <property type="match status" value="1"/>
</dbReference>
<dbReference type="PROSITE" id="PS00745">
    <property type="entry name" value="RF_PROK_I"/>
    <property type="match status" value="1"/>
</dbReference>
<accession>Q38WJ4</accession>